<protein>
    <recommendedName>
        <fullName>Protein-S-isoprenylcysteine O-methyltransferase</fullName>
        <shortName>ICMT</shortName>
        <ecNumber>2.1.1.100</ecNumber>
    </recommendedName>
    <alternativeName>
        <fullName>Isoprenylcysteine carboxylmethyltransferase</fullName>
    </alternativeName>
    <alternativeName>
        <fullName>Prenylated protein carboxyl methyltransferase</fullName>
        <shortName>PPMT</shortName>
    </alternativeName>
    <alternativeName>
        <fullName>Prenylcysteine carboxyl methyltransferase</fullName>
        <shortName>pcCMT</shortName>
    </alternativeName>
</protein>
<accession>P32584</accession>
<accession>D6VT42</accession>
<reference key="1">
    <citation type="journal article" date="1991" name="EMBO J.">
        <title>The Saccharomyces cerevisiae STE14 gene encodes a methyltransferase that mediates C-terminal methylation of a-factor and RAS proteins.</title>
        <authorList>
            <person name="Hrycyna C.A."/>
            <person name="Sapperstein S.K."/>
            <person name="Clarke S."/>
            <person name="Michaelis S."/>
        </authorList>
    </citation>
    <scope>NUCLEOTIDE SEQUENCE</scope>
</reference>
<reference key="2">
    <citation type="journal article" date="1993" name="Yeast">
        <title>Isolation and DNA sequence of the STE14 gene encoding farnesyl cysteine: carboxyl methyltransferase.</title>
        <authorList>
            <person name="Ashby M.N."/>
            <person name="Errada P.R."/>
            <person name="Boyartchuk V.L."/>
            <person name="Rine J."/>
        </authorList>
    </citation>
    <scope>NUCLEOTIDE SEQUENCE</scope>
</reference>
<reference key="3">
    <citation type="journal article" date="1994" name="Mol. Cell. Biol.">
        <title>Nucleotide sequence of the yeast STE14 gene, which encodes farnesylcysteine carboxyl methyltransferase, and demonstration of its essential role in a-factor export.</title>
        <authorList>
            <person name="Sapperstein S."/>
            <person name="Berkower C."/>
            <person name="Michaelis S."/>
        </authorList>
    </citation>
    <scope>NUCLEOTIDE SEQUENCE</scope>
    <scope>FUNCTION</scope>
</reference>
<reference key="4">
    <citation type="journal article" date="1997" name="Nature">
        <title>The nucleotide sequence of Saccharomyces cerevisiae chromosome IV.</title>
        <authorList>
            <person name="Jacq C."/>
            <person name="Alt-Moerbe J."/>
            <person name="Andre B."/>
            <person name="Arnold W."/>
            <person name="Bahr A."/>
            <person name="Ballesta J.P.G."/>
            <person name="Bargues M."/>
            <person name="Baron L."/>
            <person name="Becker A."/>
            <person name="Biteau N."/>
            <person name="Bloecker H."/>
            <person name="Blugeon C."/>
            <person name="Boskovic J."/>
            <person name="Brandt P."/>
            <person name="Brueckner M."/>
            <person name="Buitrago M.J."/>
            <person name="Coster F."/>
            <person name="Delaveau T."/>
            <person name="del Rey F."/>
            <person name="Dujon B."/>
            <person name="Eide L.G."/>
            <person name="Garcia-Cantalejo J.M."/>
            <person name="Goffeau A."/>
            <person name="Gomez-Peris A."/>
            <person name="Granotier C."/>
            <person name="Hanemann V."/>
            <person name="Hankeln T."/>
            <person name="Hoheisel J.D."/>
            <person name="Jaeger W."/>
            <person name="Jimenez A."/>
            <person name="Jonniaux J.-L."/>
            <person name="Kraemer C."/>
            <person name="Kuester H."/>
            <person name="Laamanen P."/>
            <person name="Legros Y."/>
            <person name="Louis E.J."/>
            <person name="Moeller-Rieker S."/>
            <person name="Monnet A."/>
            <person name="Moro M."/>
            <person name="Mueller-Auer S."/>
            <person name="Nussbaumer B."/>
            <person name="Paricio N."/>
            <person name="Paulin L."/>
            <person name="Perea J."/>
            <person name="Perez-Alonso M."/>
            <person name="Perez-Ortin J.E."/>
            <person name="Pohl T.M."/>
            <person name="Prydz H."/>
            <person name="Purnelle B."/>
            <person name="Rasmussen S.W."/>
            <person name="Remacha M.A."/>
            <person name="Revuelta J.L."/>
            <person name="Rieger M."/>
            <person name="Salom D."/>
            <person name="Saluz H.P."/>
            <person name="Saiz J.E."/>
            <person name="Saren A.-M."/>
            <person name="Schaefer M."/>
            <person name="Scharfe M."/>
            <person name="Schmidt E.R."/>
            <person name="Schneider C."/>
            <person name="Scholler P."/>
            <person name="Schwarz S."/>
            <person name="Soler-Mira A."/>
            <person name="Urrestarazu L.A."/>
            <person name="Verhasselt P."/>
            <person name="Vissers S."/>
            <person name="Voet M."/>
            <person name="Volckaert G."/>
            <person name="Wagner G."/>
            <person name="Wambutt R."/>
            <person name="Wedler E."/>
            <person name="Wedler H."/>
            <person name="Woelfl S."/>
            <person name="Harris D.E."/>
            <person name="Bowman S."/>
            <person name="Brown D."/>
            <person name="Churcher C.M."/>
            <person name="Connor R."/>
            <person name="Dedman K."/>
            <person name="Gentles S."/>
            <person name="Hamlin N."/>
            <person name="Hunt S."/>
            <person name="Jones L."/>
            <person name="McDonald S."/>
            <person name="Murphy L.D."/>
            <person name="Niblett D."/>
            <person name="Odell C."/>
            <person name="Oliver K."/>
            <person name="Rajandream M.A."/>
            <person name="Richards C."/>
            <person name="Shore L."/>
            <person name="Walsh S.V."/>
            <person name="Barrell B.G."/>
            <person name="Dietrich F.S."/>
            <person name="Mulligan J.T."/>
            <person name="Allen E."/>
            <person name="Araujo R."/>
            <person name="Aviles E."/>
            <person name="Berno A."/>
            <person name="Carpenter J."/>
            <person name="Chen E."/>
            <person name="Cherry J.M."/>
            <person name="Chung E."/>
            <person name="Duncan M."/>
            <person name="Hunicke-Smith S."/>
            <person name="Hyman R.W."/>
            <person name="Komp C."/>
            <person name="Lashkari D."/>
            <person name="Lew H."/>
            <person name="Lin D."/>
            <person name="Mosedale D."/>
            <person name="Nakahara K."/>
            <person name="Namath A."/>
            <person name="Oefner P."/>
            <person name="Oh C."/>
            <person name="Petel F.X."/>
            <person name="Roberts D."/>
            <person name="Schramm S."/>
            <person name="Schroeder M."/>
            <person name="Shogren T."/>
            <person name="Shroff N."/>
            <person name="Winant A."/>
            <person name="Yelton M.A."/>
            <person name="Botstein D."/>
            <person name="Davis R.W."/>
            <person name="Johnston M."/>
            <person name="Andrews S."/>
            <person name="Brinkman R."/>
            <person name="Cooper J."/>
            <person name="Ding H."/>
            <person name="Du Z."/>
            <person name="Favello A."/>
            <person name="Fulton L."/>
            <person name="Gattung S."/>
            <person name="Greco T."/>
            <person name="Hallsworth K."/>
            <person name="Hawkins J."/>
            <person name="Hillier L.W."/>
            <person name="Jier M."/>
            <person name="Johnson D."/>
            <person name="Johnston L."/>
            <person name="Kirsten J."/>
            <person name="Kucaba T."/>
            <person name="Langston Y."/>
            <person name="Latreille P."/>
            <person name="Le T."/>
            <person name="Mardis E."/>
            <person name="Menezes S."/>
            <person name="Miller N."/>
            <person name="Nhan M."/>
            <person name="Pauley A."/>
            <person name="Peluso D."/>
            <person name="Rifkin L."/>
            <person name="Riles L."/>
            <person name="Taich A."/>
            <person name="Trevaskis E."/>
            <person name="Vignati D."/>
            <person name="Wilcox L."/>
            <person name="Wohldman P."/>
            <person name="Vaudin M."/>
            <person name="Wilson R."/>
            <person name="Waterston R."/>
            <person name="Albermann K."/>
            <person name="Hani J."/>
            <person name="Heumann K."/>
            <person name="Kleine K."/>
            <person name="Mewes H.-W."/>
            <person name="Zollner A."/>
            <person name="Zaccaria P."/>
        </authorList>
    </citation>
    <scope>NUCLEOTIDE SEQUENCE [LARGE SCALE GENOMIC DNA]</scope>
    <source>
        <strain>ATCC 204508 / S288c</strain>
    </source>
</reference>
<reference key="5">
    <citation type="journal article" date="2014" name="G3 (Bethesda)">
        <title>The reference genome sequence of Saccharomyces cerevisiae: Then and now.</title>
        <authorList>
            <person name="Engel S.R."/>
            <person name="Dietrich F.S."/>
            <person name="Fisk D.G."/>
            <person name="Binkley G."/>
            <person name="Balakrishnan R."/>
            <person name="Costanzo M.C."/>
            <person name="Dwight S.S."/>
            <person name="Hitz B.C."/>
            <person name="Karra K."/>
            <person name="Nash R.S."/>
            <person name="Weng S."/>
            <person name="Wong E.D."/>
            <person name="Lloyd P."/>
            <person name="Skrzypek M.S."/>
            <person name="Miyasato S.R."/>
            <person name="Simison M."/>
            <person name="Cherry J.M."/>
        </authorList>
    </citation>
    <scope>GENOME REANNOTATION</scope>
    <source>
        <strain>ATCC 204508 / S288c</strain>
    </source>
</reference>
<reference key="6">
    <citation type="journal article" date="1998" name="Mol. Biol. Cell">
        <title>The Saccharomyces cerevisiae prenylcysteine carboxyl methyltransferase Ste14p is in the endoplasmic reticulum membrane.</title>
        <authorList>
            <person name="Romano J.D."/>
            <person name="Schmidt W.K."/>
            <person name="Michaelis S."/>
        </authorList>
    </citation>
    <scope>SUBCELLULAR LOCATION</scope>
</reference>
<reference key="7">
    <citation type="journal article" date="2001" name="Mol. Biol. Cell">
        <title>Topological and mutational analysis of Saccharomyces cerevisiae Ste14p, founding member of the isoprenylcysteine carboxyl methyltransferase family.</title>
        <authorList>
            <person name="Romano J.D."/>
            <person name="Michaelis S."/>
        </authorList>
    </citation>
    <scope>FUNCTION</scope>
    <scope>TOPOLOGY</scope>
    <scope>MUTAGENESIS OF GLY-31; LEU-81; GLY-132; PRO-173; GLU-213; GLU-214 AND LEU-217</scope>
</reference>
<reference key="8">
    <citation type="journal article" date="2003" name="Nature">
        <title>Global analysis of protein localization in budding yeast.</title>
        <authorList>
            <person name="Huh W.-K."/>
            <person name="Falvo J.V."/>
            <person name="Gerke L.C."/>
            <person name="Carroll A.S."/>
            <person name="Howson R.W."/>
            <person name="Weissman J.S."/>
            <person name="O'Shea E.K."/>
        </authorList>
    </citation>
    <scope>SUBCELLULAR LOCATION [LARGE SCALE ANALYSIS]</scope>
</reference>
<reference key="9">
    <citation type="journal article" date="2003" name="Nature">
        <title>Global analysis of protein expression in yeast.</title>
        <authorList>
            <person name="Ghaemmaghami S."/>
            <person name="Huh W.-K."/>
            <person name="Bower K."/>
            <person name="Howson R.W."/>
            <person name="Belle A."/>
            <person name="Dephoure N."/>
            <person name="O'Shea E.K."/>
            <person name="Weissman J.S."/>
        </authorList>
    </citation>
    <scope>LEVEL OF PROTEIN EXPRESSION [LARGE SCALE ANALYSIS]</scope>
</reference>
<reference key="10">
    <citation type="journal article" date="2005" name="J. Biol. Chem.">
        <title>Purification, functional reconstitution, and characterization of the Saccharomyces cerevisiae isoprenylcysteine carboxylmethyltransferase Ste14p.</title>
        <authorList>
            <person name="Anderson J.L."/>
            <person name="Frase H."/>
            <person name="Michaelis S."/>
            <person name="Hrycyna C.A."/>
        </authorList>
    </citation>
    <scope>FUNCTION</scope>
    <scope>CATALYTIC ACTIVITY</scope>
</reference>
<reference key="11">
    <citation type="journal article" date="2006" name="Proc. Natl. Acad. Sci. U.S.A.">
        <title>A global topology map of the Saccharomyces cerevisiae membrane proteome.</title>
        <authorList>
            <person name="Kim H."/>
            <person name="Melen K."/>
            <person name="Oesterberg M."/>
            <person name="von Heijne G."/>
        </authorList>
    </citation>
    <scope>TOPOLOGY [LARGE SCALE ANALYSIS]</scope>
    <source>
        <strain>ATCC 208353 / W303-1A</strain>
    </source>
</reference>
<proteinExistence type="evidence at protein level"/>
<dbReference type="EC" id="2.1.1.100"/>
<dbReference type="EMBL" id="L07952">
    <property type="protein sequence ID" value="AAA16520.1"/>
    <property type="molecule type" value="Unassigned_DNA"/>
</dbReference>
<dbReference type="EMBL" id="L15442">
    <property type="protein sequence ID" value="AAA16840.1"/>
    <property type="molecule type" value="Unassigned_DNA"/>
</dbReference>
<dbReference type="EMBL" id="U33007">
    <property type="protein sequence ID" value="AAB64880.1"/>
    <property type="molecule type" value="Genomic_DNA"/>
</dbReference>
<dbReference type="EMBL" id="BK006938">
    <property type="protein sequence ID" value="DAA12252.1"/>
    <property type="molecule type" value="Genomic_DNA"/>
</dbReference>
<dbReference type="PIR" id="S37604">
    <property type="entry name" value="S37604"/>
</dbReference>
<dbReference type="RefSeq" id="NP_010698.1">
    <property type="nucleotide sequence ID" value="NM_001180718.1"/>
</dbReference>
<dbReference type="SMR" id="P32584"/>
<dbReference type="BioGRID" id="32470">
    <property type="interactions" value="19"/>
</dbReference>
<dbReference type="DIP" id="DIP-2678N"/>
<dbReference type="FunCoup" id="P32584">
    <property type="interactions" value="622"/>
</dbReference>
<dbReference type="IntAct" id="P32584">
    <property type="interactions" value="3"/>
</dbReference>
<dbReference type="MINT" id="P32584"/>
<dbReference type="STRING" id="4932.YDR410C"/>
<dbReference type="BindingDB" id="P32584"/>
<dbReference type="ChEMBL" id="CHEMBL4385"/>
<dbReference type="PaxDb" id="4932-YDR410C"/>
<dbReference type="PeptideAtlas" id="P32584"/>
<dbReference type="EnsemblFungi" id="YDR410C_mRNA">
    <property type="protein sequence ID" value="YDR410C"/>
    <property type="gene ID" value="YDR410C"/>
</dbReference>
<dbReference type="GeneID" id="852019"/>
<dbReference type="KEGG" id="sce:YDR410C"/>
<dbReference type="AGR" id="SGD:S000002818"/>
<dbReference type="SGD" id="S000002818">
    <property type="gene designation" value="STE14"/>
</dbReference>
<dbReference type="VEuPathDB" id="FungiDB:YDR410C"/>
<dbReference type="eggNOG" id="KOG2628">
    <property type="taxonomic scope" value="Eukaryota"/>
</dbReference>
<dbReference type="GeneTree" id="ENSGT00390000017394"/>
<dbReference type="HOGENOM" id="CLU_065200_0_2_1"/>
<dbReference type="InParanoid" id="P32584"/>
<dbReference type="OMA" id="GMVPQVW"/>
<dbReference type="OrthoDB" id="422086at2759"/>
<dbReference type="BioCyc" id="YEAST:G3O-29953-MONOMER"/>
<dbReference type="Reactome" id="R-SCE-163841">
    <property type="pathway name" value="Gamma carboxylation, hypusinylation, hydroxylation, and arylsulfatase activation"/>
</dbReference>
<dbReference type="BioGRID-ORCS" id="852019">
    <property type="hits" value="0 hits in 10 CRISPR screens"/>
</dbReference>
<dbReference type="PRO" id="PR:P32584"/>
<dbReference type="Proteomes" id="UP000002311">
    <property type="component" value="Chromosome IV"/>
</dbReference>
<dbReference type="RNAct" id="P32584">
    <property type="molecule type" value="protein"/>
</dbReference>
<dbReference type="GO" id="GO:0005783">
    <property type="term" value="C:endoplasmic reticulum"/>
    <property type="evidence" value="ECO:0007005"/>
    <property type="project" value="SGD"/>
</dbReference>
<dbReference type="GO" id="GO:0005789">
    <property type="term" value="C:endoplasmic reticulum membrane"/>
    <property type="evidence" value="ECO:0000314"/>
    <property type="project" value="SGD"/>
</dbReference>
<dbReference type="GO" id="GO:0005637">
    <property type="term" value="C:nuclear inner membrane"/>
    <property type="evidence" value="ECO:0000315"/>
    <property type="project" value="SGD"/>
</dbReference>
<dbReference type="GO" id="GO:0004671">
    <property type="term" value="F:protein C-terminal S-isoprenylcysteine carboxyl O-methyltransferase activity"/>
    <property type="evidence" value="ECO:0000314"/>
    <property type="project" value="SGD"/>
</dbReference>
<dbReference type="GO" id="GO:0032259">
    <property type="term" value="P:methylation"/>
    <property type="evidence" value="ECO:0007669"/>
    <property type="project" value="UniProtKB-KW"/>
</dbReference>
<dbReference type="GO" id="GO:0007323">
    <property type="term" value="P:peptide pheromone maturation"/>
    <property type="evidence" value="ECO:0000315"/>
    <property type="project" value="SGD"/>
</dbReference>
<dbReference type="GO" id="GO:0019236">
    <property type="term" value="P:response to pheromone"/>
    <property type="evidence" value="ECO:0007669"/>
    <property type="project" value="UniProtKB-KW"/>
</dbReference>
<dbReference type="FunFam" id="1.20.120.1630:FF:000018">
    <property type="entry name" value="Protein-S-isoprenylcysteine O-methyltransferase"/>
    <property type="match status" value="1"/>
</dbReference>
<dbReference type="Gene3D" id="1.20.120.1630">
    <property type="match status" value="1"/>
</dbReference>
<dbReference type="InterPro" id="IPR007269">
    <property type="entry name" value="ICMT_MeTrfase"/>
</dbReference>
<dbReference type="InterPro" id="IPR025770">
    <property type="entry name" value="PPMT_MeTrfase"/>
</dbReference>
<dbReference type="PANTHER" id="PTHR12714">
    <property type="entry name" value="PROTEIN-S ISOPRENYLCYSTEINE O-METHYLTRANSFERASE"/>
    <property type="match status" value="1"/>
</dbReference>
<dbReference type="PANTHER" id="PTHR12714:SF9">
    <property type="entry name" value="PROTEIN-S-ISOPRENYLCYSTEINE O-METHYLTRANSFERASE"/>
    <property type="match status" value="1"/>
</dbReference>
<dbReference type="Pfam" id="PF04140">
    <property type="entry name" value="ICMT"/>
    <property type="match status" value="1"/>
</dbReference>
<dbReference type="PROSITE" id="PS51564">
    <property type="entry name" value="SAM_ICMT"/>
    <property type="match status" value="1"/>
</dbReference>
<organism>
    <name type="scientific">Saccharomyces cerevisiae (strain ATCC 204508 / S288c)</name>
    <name type="common">Baker's yeast</name>
    <dbReference type="NCBI Taxonomy" id="559292"/>
    <lineage>
        <taxon>Eukaryota</taxon>
        <taxon>Fungi</taxon>
        <taxon>Dikarya</taxon>
        <taxon>Ascomycota</taxon>
        <taxon>Saccharomycotina</taxon>
        <taxon>Saccharomycetes</taxon>
        <taxon>Saccharomycetales</taxon>
        <taxon>Saccharomycetaceae</taxon>
        <taxon>Saccharomyces</taxon>
    </lineage>
</organism>
<sequence>MHQDFQEDEHEYPDIRRNPLHEVTMTSYILGILLGIFVGLFPQIRFKNFNLFIIALSLFHFLEYYITAKYNPLKVHSESFLLNNGKSYMAAHSFAILECLVESFLFPDLKIFSYSLATKLCTVLGCLLVILGQYTRTIAMHTAGHSFSHIVKTKKESDHVLVKTGVYSWSRHPSYLGFFWWAIGTQLLLLNPLSLVIFIFVLWKFFSDRIRVEEKYLIEFFSAEYIEYKNKVGVGIPFI</sequence>
<keyword id="KW-0256">Endoplasmic reticulum</keyword>
<keyword id="KW-0472">Membrane</keyword>
<keyword id="KW-0489">Methyltransferase</keyword>
<keyword id="KW-0589">Pheromone response</keyword>
<keyword id="KW-1185">Reference proteome</keyword>
<keyword id="KW-0949">S-adenosyl-L-methionine</keyword>
<keyword id="KW-0808">Transferase</keyword>
<keyword id="KW-0812">Transmembrane</keyword>
<keyword id="KW-1133">Transmembrane helix</keyword>
<evidence type="ECO:0000250" key="1">
    <source>
        <dbReference type="UniProtKB" id="D6WJ77"/>
    </source>
</evidence>
<evidence type="ECO:0000250" key="2">
    <source>
        <dbReference type="UniProtKB" id="Q8TMG0"/>
    </source>
</evidence>
<evidence type="ECO:0000255" key="3"/>
<evidence type="ECO:0000269" key="4">
    <source>
    </source>
</evidence>
<evidence type="ECO:0000269" key="5">
    <source>
    </source>
</evidence>
<evidence type="ECO:0000269" key="6">
    <source>
    </source>
</evidence>
<evidence type="ECO:0000269" key="7">
    <source>
    </source>
</evidence>
<evidence type="ECO:0000269" key="8">
    <source>
    </source>
</evidence>
<evidence type="ECO:0000269" key="9">
    <source>
    </source>
</evidence>
<evidence type="ECO:0000269" key="10">
    <source>
    </source>
</evidence>
<evidence type="ECO:0000305" key="11"/>
<evidence type="ECO:0000305" key="12">
    <source>
    </source>
</evidence>
<evidence type="ECO:0000305" key="13">
    <source>
    </source>
</evidence>
<comment type="function">
    <text evidence="4 7 9">Mediates C-terminal methylation of the isoprenylated C-terminal cysteine in A-factor mating pheromone and Ras proteins (PubMed:11451995, PubMed:15611058, PubMed:8289819). Does not have a preference for the farnesyl or geranylgeranyl moieties in the model substrates N-acetyl-S-farnesyl-L-cysteine (AFC) and N-acetyl-S-geranylgeranyl-L-cysteine (AGGC) in vitro (PubMed:15611058).</text>
</comment>
<comment type="catalytic activity">
    <reaction evidence="7">
        <text>[protein]-C-terminal S-[(2E,6E)-farnesyl]-L-cysteine + S-adenosyl-L-methionine = [protein]-C-terminal S-[(2E,6E)-farnesyl]-L-cysteine methyl ester + S-adenosyl-L-homocysteine</text>
        <dbReference type="Rhea" id="RHEA:21672"/>
        <dbReference type="Rhea" id="RHEA-COMP:12125"/>
        <dbReference type="Rhea" id="RHEA-COMP:12126"/>
        <dbReference type="ChEBI" id="CHEBI:57856"/>
        <dbReference type="ChEBI" id="CHEBI:59789"/>
        <dbReference type="ChEBI" id="CHEBI:90510"/>
        <dbReference type="ChEBI" id="CHEBI:90511"/>
        <dbReference type="EC" id="2.1.1.100"/>
    </reaction>
</comment>
<comment type="biophysicochemical properties">
    <kinetics>
        <KM evidence="7">3 uM for N-acetyl-S-farnesyl-L-cysteine (AFC)</KM>
        <KM evidence="7">3.2 uM for N-acetyl-S-geranylgeranyl-L-cysteine (AGGC)</KM>
        <Vmax evidence="7">50782.0 pmol/min/mg enzyme for N-acetyl-S-farnesyl-L-cysteine (AFC)</Vmax>
        <Vmax evidence="7">56667.0 pmol/min/mg enzyme for N-acetyl-S-geranylgeranyl-L-cysteine (AGGC)</Vmax>
    </kinetics>
    <phDependence>
        <text evidence="7">Optimum pH is 7.</text>
    </phDependence>
</comment>
<comment type="subcellular location">
    <subcellularLocation>
        <location evidence="5 10">Endoplasmic reticulum membrane</location>
        <topology evidence="3">Multi-pass membrane protein</topology>
    </subcellularLocation>
</comment>
<comment type="miscellaneous">
    <text evidence="6">Present with 2690 molecules/cell in log phase SD medium.</text>
</comment>
<comment type="similarity">
    <text evidence="11">Belongs to the class VI-like SAM-binding methyltransferase superfamily. Isoprenylcysteine carboxyl methyltransferase family.</text>
</comment>
<feature type="chain" id="PRO_0000209899" description="Protein-S-isoprenylcysteine O-methyltransferase">
    <location>
        <begin position="1"/>
        <end position="239"/>
    </location>
</feature>
<feature type="topological domain" description="Cytoplasmic" evidence="4 13">
    <location>
        <begin position="1"/>
        <end position="23"/>
    </location>
</feature>
<feature type="transmembrane region" description="Helical" evidence="3">
    <location>
        <begin position="24"/>
        <end position="44"/>
    </location>
</feature>
<feature type="topological domain" description="Lumenal" evidence="12 13">
    <location>
        <begin position="45"/>
        <end position="47"/>
    </location>
</feature>
<feature type="transmembrane region" description="Helical" evidence="3">
    <location>
        <begin position="48"/>
        <end position="68"/>
    </location>
</feature>
<feature type="topological domain" description="Cytoplasmic" evidence="12 13">
    <location>
        <begin position="69"/>
        <end position="88"/>
    </location>
</feature>
<feature type="transmembrane region" description="Helical" evidence="3">
    <location>
        <begin position="89"/>
        <end position="109"/>
    </location>
</feature>
<feature type="topological domain" description="Lumenal" evidence="12 13">
    <location>
        <position position="110"/>
    </location>
</feature>
<feature type="transmembrane region" description="Helical" evidence="3">
    <location>
        <begin position="111"/>
        <end position="131"/>
    </location>
</feature>
<feature type="topological domain" description="Cytoplasmic" evidence="12 13">
    <location>
        <begin position="132"/>
        <end position="175"/>
    </location>
</feature>
<feature type="intramembrane region" description="Helical" evidence="12">
    <location>
        <begin position="176"/>
        <end position="206"/>
    </location>
</feature>
<feature type="topological domain" description="Cytoplasmic" evidence="4 8">
    <location>
        <begin position="207"/>
        <end position="239"/>
    </location>
</feature>
<feature type="binding site" evidence="2">
    <location>
        <begin position="159"/>
        <end position="162"/>
    </location>
    <ligand>
        <name>S-adenosyl-L-methionine</name>
        <dbReference type="ChEBI" id="CHEBI:59789"/>
    </ligand>
</feature>
<feature type="binding site" evidence="2">
    <location>
        <position position="167"/>
    </location>
    <ligand>
        <name>S-adenosyl-L-methionine</name>
        <dbReference type="ChEBI" id="CHEBI:59789"/>
    </ligand>
</feature>
<feature type="binding site" evidence="2">
    <location>
        <begin position="172"/>
        <end position="175"/>
    </location>
    <ligand>
        <name>S-adenosyl-L-methionine</name>
        <dbReference type="ChEBI" id="CHEBI:59789"/>
    </ligand>
</feature>
<feature type="binding site" evidence="1">
    <location>
        <position position="209"/>
    </location>
    <ligand>
        <name>substrate</name>
    </ligand>
</feature>
<feature type="binding site" evidence="2">
    <location>
        <position position="213"/>
    </location>
    <ligand>
        <name>S-adenosyl-L-methionine</name>
        <dbReference type="ChEBI" id="CHEBI:59789"/>
    </ligand>
</feature>
<feature type="mutagenesis site" description="Abolishes function." evidence="4">
    <original>G</original>
    <variation>E</variation>
    <location>
        <position position="31"/>
    </location>
</feature>
<feature type="mutagenesis site" description="Abolishes function." evidence="4">
    <original>L</original>
    <variation>F</variation>
    <location>
        <position position="81"/>
    </location>
</feature>
<feature type="mutagenesis site" description="Abolishes function." evidence="4">
    <original>G</original>
    <variation>R</variation>
    <location>
        <position position="132"/>
    </location>
</feature>
<feature type="mutagenesis site" description="Abolishes function." evidence="4">
    <original>P</original>
    <variation>L</variation>
    <location>
        <position position="173"/>
    </location>
</feature>
<feature type="mutagenesis site" description="Abolishes function." evidence="4">
    <original>E</original>
    <variation>D</variation>
    <location>
        <position position="213"/>
    </location>
</feature>
<feature type="mutagenesis site" description="Abolishes function." evidence="4">
    <original>E</original>
    <variation>D</variation>
    <variation>Q</variation>
    <location>
        <position position="214"/>
    </location>
</feature>
<feature type="mutagenesis site" description="Abolishes function." evidence="4">
    <original>L</original>
    <variation>S</variation>
    <location>
        <position position="217"/>
    </location>
</feature>
<name>STE14_YEAST</name>
<gene>
    <name type="primary">STE14</name>
    <name type="ordered locus">YDR410C</name>
    <name type="ORF">D9461.1</name>
</gene>